<accession>P17042</accession>
<evidence type="ECO:0000255" key="1">
    <source>
        <dbReference type="HAMAP-Rule" id="MF_04066"/>
    </source>
</evidence>
<evidence type="ECO:0000256" key="2">
    <source>
        <dbReference type="SAM" id="MobiDB-lite"/>
    </source>
</evidence>
<keyword id="KW-0025">Alternative splicing</keyword>
<keyword id="KW-1262">Eukaryotic host gene expression shutoff by virus</keyword>
<keyword id="KW-1035">Host cytoplasm</keyword>
<keyword id="KW-1190">Host gene expression shutoff by virus</keyword>
<keyword id="KW-1192">Host mRNA suppression by virus</keyword>
<keyword id="KW-1048">Host nucleus</keyword>
<keyword id="KW-0945">Host-virus interaction</keyword>
<keyword id="KW-1090">Inhibition of host innate immune response by virus</keyword>
<keyword id="KW-1114">Inhibition of host interferon signaling pathway by virus</keyword>
<keyword id="KW-1102">Inhibition of host PKR by virus</keyword>
<keyword id="KW-1103">Inhibition of host pre-mRNA processing by virus</keyword>
<keyword id="KW-1088">Inhibition of host RIG-I by virus</keyword>
<keyword id="KW-1113">Inhibition of host RLR pathway by virus</keyword>
<keyword id="KW-0922">Interferon antiviral system evasion</keyword>
<keyword id="KW-0694">RNA-binding</keyword>
<keyword id="KW-0832">Ubl conjugation</keyword>
<keyword id="KW-0899">Viral immunoevasion</keyword>
<organismHost>
    <name type="scientific">Aves</name>
    <dbReference type="NCBI Taxonomy" id="8782"/>
</organismHost>
<organismHost>
    <name type="scientific">Homo sapiens</name>
    <name type="common">Human</name>
    <dbReference type="NCBI Taxonomy" id="9606"/>
</organismHost>
<organismHost>
    <name type="scientific">Sus scrofa</name>
    <name type="common">Pig</name>
    <dbReference type="NCBI Taxonomy" id="9823"/>
</organismHost>
<dbReference type="EMBL" id="X52146">
    <property type="protein sequence ID" value="CAA36392.1"/>
    <property type="molecule type" value="Genomic_RNA"/>
</dbReference>
<dbReference type="SMR" id="P17042"/>
<dbReference type="GO" id="GO:0030430">
    <property type="term" value="C:host cell cytoplasm"/>
    <property type="evidence" value="ECO:0007669"/>
    <property type="project" value="UniProtKB-SubCell"/>
</dbReference>
<dbReference type="GO" id="GO:0042025">
    <property type="term" value="C:host cell nucleus"/>
    <property type="evidence" value="ECO:0007669"/>
    <property type="project" value="UniProtKB-SubCell"/>
</dbReference>
<dbReference type="GO" id="GO:0030291">
    <property type="term" value="F:protein serine/threonine kinase inhibitor activity"/>
    <property type="evidence" value="ECO:0007669"/>
    <property type="project" value="UniProtKB-KW"/>
</dbReference>
<dbReference type="GO" id="GO:0003723">
    <property type="term" value="F:RNA binding"/>
    <property type="evidence" value="ECO:0007669"/>
    <property type="project" value="UniProtKB-KW"/>
</dbReference>
<dbReference type="GO" id="GO:0039540">
    <property type="term" value="P:symbiont-mediated suppression of host cytoplasmic pattern recognition receptor signaling pathway via inhibition of RIG-I activity"/>
    <property type="evidence" value="ECO:0007669"/>
    <property type="project" value="UniProtKB-KW"/>
</dbReference>
<dbReference type="GO" id="GO:0039657">
    <property type="term" value="P:symbiont-mediated suppression of host gene expression"/>
    <property type="evidence" value="ECO:0007669"/>
    <property type="project" value="UniProtKB-KW"/>
</dbReference>
<dbReference type="GO" id="GO:0039524">
    <property type="term" value="P:symbiont-mediated suppression of host mRNA processing"/>
    <property type="evidence" value="ECO:0007669"/>
    <property type="project" value="UniProtKB-KW"/>
</dbReference>
<dbReference type="GO" id="GO:0039580">
    <property type="term" value="P:symbiont-mediated suppression of host PKR/eIFalpha signaling"/>
    <property type="evidence" value="ECO:0007669"/>
    <property type="project" value="UniProtKB-KW"/>
</dbReference>
<dbReference type="GO" id="GO:0039502">
    <property type="term" value="P:symbiont-mediated suppression of host type I interferon-mediated signaling pathway"/>
    <property type="evidence" value="ECO:0007669"/>
    <property type="project" value="UniProtKB-KW"/>
</dbReference>
<dbReference type="FunFam" id="1.10.287.10:FF:000001">
    <property type="entry name" value="Non-structural protein 1"/>
    <property type="match status" value="1"/>
</dbReference>
<dbReference type="FunFam" id="3.30.420.330:FF:000001">
    <property type="entry name" value="Non-structural protein 1"/>
    <property type="match status" value="1"/>
</dbReference>
<dbReference type="Gene3D" id="3.30.420.330">
    <property type="entry name" value="Influenza virus non-structural protein, effector domain"/>
    <property type="match status" value="1"/>
</dbReference>
<dbReference type="Gene3D" id="1.10.287.10">
    <property type="entry name" value="S15/NS1, RNA-binding"/>
    <property type="match status" value="1"/>
</dbReference>
<dbReference type="HAMAP" id="MF_04066">
    <property type="entry name" value="INFV_NS1"/>
    <property type="match status" value="1"/>
</dbReference>
<dbReference type="InterPro" id="IPR004208">
    <property type="entry name" value="NS1"/>
</dbReference>
<dbReference type="InterPro" id="IPR000256">
    <property type="entry name" value="NS1A"/>
</dbReference>
<dbReference type="InterPro" id="IPR038064">
    <property type="entry name" value="NS1A_effect_dom-like_sf"/>
</dbReference>
<dbReference type="InterPro" id="IPR009068">
    <property type="entry name" value="uS15_NS1_RNA-bd_sf"/>
</dbReference>
<dbReference type="Pfam" id="PF00600">
    <property type="entry name" value="Flu_NS1"/>
    <property type="match status" value="1"/>
</dbReference>
<dbReference type="SUPFAM" id="SSF143021">
    <property type="entry name" value="Ns1 effector domain-like"/>
    <property type="match status" value="1"/>
</dbReference>
<dbReference type="SUPFAM" id="SSF47060">
    <property type="entry name" value="S15/NS1 RNA-binding domain"/>
    <property type="match status" value="1"/>
</dbReference>
<organism>
    <name type="scientific">Influenza A virus (strain A/Leningrad/1/1954 H1N1)</name>
    <dbReference type="NCBI Taxonomy" id="393557"/>
    <lineage>
        <taxon>Viruses</taxon>
        <taxon>Riboviria</taxon>
        <taxon>Orthornavirae</taxon>
        <taxon>Negarnaviricota</taxon>
        <taxon>Polyploviricotina</taxon>
        <taxon>Insthoviricetes</taxon>
        <taxon>Articulavirales</taxon>
        <taxon>Orthomyxoviridae</taxon>
        <taxon>Alphainfluenzavirus</taxon>
        <taxon>Alphainfluenzavirus influenzae</taxon>
        <taxon>Influenza A virus</taxon>
    </lineage>
</organism>
<name>NS1_I54A0</name>
<protein>
    <recommendedName>
        <fullName evidence="1">Non-structural protein 1</fullName>
        <shortName evidence="1">NS1</shortName>
    </recommendedName>
    <alternativeName>
        <fullName evidence="1">NS1A</fullName>
    </alternativeName>
</protein>
<feature type="chain" id="PRO_0000078935" description="Non-structural protein 1">
    <location>
        <begin position="1"/>
        <end position="230"/>
    </location>
</feature>
<feature type="region of interest" description="RNA-binding and homodimerization" evidence="1">
    <location>
        <begin position="1"/>
        <end position="73"/>
    </location>
</feature>
<feature type="region of interest" description="CPSF4-binding" evidence="1">
    <location>
        <begin position="180"/>
        <end position="215"/>
    </location>
</feature>
<feature type="region of interest" description="Disordered" evidence="2">
    <location>
        <begin position="205"/>
        <end position="230"/>
    </location>
</feature>
<feature type="region of interest" description="PABPN1-binding" evidence="1">
    <location>
        <begin position="223"/>
        <end position="230"/>
    </location>
</feature>
<feature type="short sequence motif" description="Nuclear localization signal" evidence="1">
    <location>
        <begin position="34"/>
        <end position="38"/>
    </location>
</feature>
<feature type="short sequence motif" description="Nuclear export signal" evidence="1">
    <location>
        <begin position="137"/>
        <end position="146"/>
    </location>
</feature>
<feature type="compositionally biased region" description="Basic and acidic residues" evidence="2">
    <location>
        <begin position="218"/>
        <end position="230"/>
    </location>
</feature>
<reference key="1">
    <citation type="journal article" date="1985" name="Bioorg. Khim.">
        <title>Synthesis, cloning and determination of the primary structure of a full-size DNA copy of fragment 8 from the influenza virus type A genome.</title>
        <authorList>
            <person name="Beklemishev A.B."/>
            <person name="Blinov V.M."/>
            <person name="Vasilenko S.K."/>
            <person name="Golovin S.Y."/>
            <person name="Karginov V.A."/>
            <person name="Mamaev L.V."/>
            <person name="Mikriukov N.N."/>
            <person name="Netesov S.V."/>
            <person name="Petrenko V.A."/>
            <person name="Petrov V.A."/>
            <person name="Frolov I.V."/>
        </authorList>
    </citation>
    <scope>NUCLEOTIDE SEQUENCE [GENOMIC RNA]</scope>
</reference>
<reference key="2">
    <citation type="journal article" date="2003" name="Virology">
        <title>Intracellular warfare between human influenza viruses and human cells: the roles of the viral NS1 protein.</title>
        <authorList>
            <person name="Krug R.M."/>
            <person name="Yuan W."/>
            <person name="Noah D.L."/>
            <person name="Latham A.G."/>
        </authorList>
    </citation>
    <scope>REVIEW</scope>
</reference>
<sequence length="230" mass="25867">MDPNTVSSFQVDCFLWHVRKRVADQELGDAPFLDRLRRDQKSLRGRGSTLGLDIKTATRAGKQIVERILKEESDEALKMTMASVPASRYLTDMTLEEMSRDWSMLIPKQKVAGPLCIRMDQAIMDKNIILKANFSVIFDRLETLILLRAFTEEGAIVGEISPLPSLPGHTAEDVKNAVGVLIGGLEWNDNTVRVSETLQRFAWRSSNENGRPPLTPKQKREMAGTIRSEV</sequence>
<proteinExistence type="inferred from homology"/>
<comment type="function">
    <text evidence="1">Inhibits post-transcriptional processing of cellular pre-mRNA, by binding and inhibiting two cellular proteins that are required for the 3'-end processing of cellular pre-mRNAs: the 30 kDa cleavage and polyadenylation specificity factor/CPSF4 and the poly(A)-binding protein 2/PABPN1. In turn, unprocessed 3' end pre-mRNAs accumulate in the host nucleus and are no longer exported to the cytoplasm. Cellular protein synthesis is thereby shut off very early after virus infection. Viral protein synthesis is not affected by the inhibition of the cellular 3' end processing machinery because the poly(A) tails of viral mRNAs are produced by the viral polymerase through a stuttering mechanism. Prevents the establishment of the cellular antiviral state by inhibiting TRIM25-mediated RIGI ubiquitination, which normally triggers the antiviral transduction signal that leads to the activation of type I IFN genes by transcription factors IRF3 and IRF7. Also binds poly(A) and U6 snRNA. Inhibits the integrated stress response (ISR) in the infected cell by blocking dsRNA binding by EIF2AK2/PKR and further phosphorylation of EIF2S1/EIF-2ALPHA. Stress granule formation is thus inhibited, which allows protein synthesis and viral replication.</text>
</comment>
<comment type="subunit">
    <text evidence="1">Homodimer. Interacts with host TRIM25 (via coiled coil); this interaction specifically inhibits TRIM25 multimerization and TRIM25-mediated RIGI CARD ubiquitination. Interacts with human EIF2AK2/PKR, CPSF4, IVNS1ABP and PABPN1.</text>
</comment>
<comment type="subcellular location">
    <subcellularLocation>
        <location evidence="1">Host nucleus</location>
    </subcellularLocation>
    <subcellularLocation>
        <location evidence="1">Host cytoplasm</location>
    </subcellularLocation>
    <text evidence="1">In uninfected, transfected cells, NS1 is localized in the nucleus. Only in virus infected cells, the nuclear export signal is unveiled, presumably by a viral protein, and a fraction of NS1 is exported in the cytoplasm.</text>
</comment>
<comment type="alternative products">
    <event type="alternative splicing"/>
    <isoform>
        <id>P17042-1</id>
        <name>NS1</name>
        <sequence type="displayed"/>
    </isoform>
    <isoform>
        <id>P17043-1</id>
        <name>NEP</name>
        <name>NS2</name>
        <sequence type="external"/>
    </isoform>
</comment>
<comment type="domain">
    <text evidence="1">The dsRNA-binding region is required for suppression of RNA silencing.</text>
</comment>
<comment type="PTM">
    <text evidence="1">Upon interferon induction, ISGylated via host HERC5; this results in the impairment of NS1 interaction with RNA targets due to its inability to form homodimers and to interact with host EIF2AK2/PKR.</text>
</comment>
<comment type="similarity">
    <text evidence="1">Belongs to the influenza A viruses NS1 family.</text>
</comment>
<gene>
    <name evidence="1" type="primary">NS</name>
</gene>